<comment type="function">
    <text evidence="1">Component of the coat protein complex II (COPII) which promotes the formation of transport vesicles from the endoplasmic reticulum (ER). The coat has two main functions, the physical deformation of the endoplasmic reticulum membrane into vesicles and the selection of cargo molecules (By similarity).</text>
</comment>
<comment type="subunit">
    <text evidence="1">The COPII coat is composed of at least 5 proteins: the SEC23/24 complex, the SEC13/31 complex, and the protein SAR1. SEC13 and SEC31 make a 2:2 tetramer that forms the edge element of the COPII outer coat. The tetramer self-assembles in multiple copies to form the complete polyhedral cage. Interacts (via WD 8) with SEC13 (By similarity).</text>
</comment>
<comment type="subcellular location">
    <subcellularLocation>
        <location evidence="1">Cytoplasmic vesicle</location>
        <location evidence="1">COPII-coated vesicle membrane</location>
        <topology evidence="1">Peripheral membrane protein</topology>
        <orientation evidence="1">Cytoplasmic side</orientation>
    </subcellularLocation>
    <subcellularLocation>
        <location evidence="1">Endoplasmic reticulum membrane</location>
        <topology evidence="1">Peripheral membrane protein</topology>
        <orientation evidence="1">Cytoplasmic side</orientation>
    </subcellularLocation>
</comment>
<comment type="similarity">
    <text evidence="4">Belongs to the WD repeat SEC31 family.</text>
</comment>
<gene>
    <name type="primary">SEC31</name>
    <name type="ORF">PICST_80311</name>
</gene>
<dbReference type="EMBL" id="AAVQ01000001">
    <property type="protein sequence ID" value="EAZ63772.2"/>
    <property type="molecule type" value="Genomic_DNA"/>
</dbReference>
<dbReference type="RefSeq" id="XP_001387795.2">
    <property type="nucleotide sequence ID" value="XM_001387758.1"/>
</dbReference>
<dbReference type="SMR" id="A3GFK8"/>
<dbReference type="FunCoup" id="A3GFK8">
    <property type="interactions" value="740"/>
</dbReference>
<dbReference type="STRING" id="322104.A3GFK8"/>
<dbReference type="GeneID" id="4851057"/>
<dbReference type="KEGG" id="pic:PICST_80311"/>
<dbReference type="eggNOG" id="KOG0307">
    <property type="taxonomic scope" value="Eukaryota"/>
</dbReference>
<dbReference type="HOGENOM" id="CLU_003033_2_0_1"/>
<dbReference type="InParanoid" id="A3GFK8"/>
<dbReference type="OMA" id="AQWAFGG"/>
<dbReference type="OrthoDB" id="542917at2759"/>
<dbReference type="Proteomes" id="UP000002258">
    <property type="component" value="Chromosome 1"/>
</dbReference>
<dbReference type="GO" id="GO:0030127">
    <property type="term" value="C:COPII vesicle coat"/>
    <property type="evidence" value="ECO:0007669"/>
    <property type="project" value="EnsemblFungi"/>
</dbReference>
<dbReference type="GO" id="GO:0070971">
    <property type="term" value="C:endoplasmic reticulum exit site"/>
    <property type="evidence" value="ECO:0007669"/>
    <property type="project" value="TreeGrafter"/>
</dbReference>
<dbReference type="GO" id="GO:0005789">
    <property type="term" value="C:endoplasmic reticulum membrane"/>
    <property type="evidence" value="ECO:0007669"/>
    <property type="project" value="UniProtKB-SubCell"/>
</dbReference>
<dbReference type="GO" id="GO:0005198">
    <property type="term" value="F:structural molecule activity"/>
    <property type="evidence" value="ECO:0007669"/>
    <property type="project" value="EnsemblFungi"/>
</dbReference>
<dbReference type="GO" id="GO:0090110">
    <property type="term" value="P:COPII-coated vesicle cargo loading"/>
    <property type="evidence" value="ECO:0007669"/>
    <property type="project" value="TreeGrafter"/>
</dbReference>
<dbReference type="GO" id="GO:0007029">
    <property type="term" value="P:endoplasmic reticulum organization"/>
    <property type="evidence" value="ECO:0007669"/>
    <property type="project" value="TreeGrafter"/>
</dbReference>
<dbReference type="GO" id="GO:1902953">
    <property type="term" value="P:positive regulation of ER to Golgi vesicle-mediated transport"/>
    <property type="evidence" value="ECO:0007669"/>
    <property type="project" value="EnsemblFungi"/>
</dbReference>
<dbReference type="GO" id="GO:0070863">
    <property type="term" value="P:positive regulation of protein exit from endoplasmic reticulum"/>
    <property type="evidence" value="ECO:0007669"/>
    <property type="project" value="EnsemblFungi"/>
</dbReference>
<dbReference type="GO" id="GO:0015031">
    <property type="term" value="P:protein transport"/>
    <property type="evidence" value="ECO:0007669"/>
    <property type="project" value="UniProtKB-KW"/>
</dbReference>
<dbReference type="FunFam" id="2.130.10.10:FF:000526">
    <property type="entry name" value="Protein transport protein SEC31"/>
    <property type="match status" value="1"/>
</dbReference>
<dbReference type="Gene3D" id="1.25.40.1030">
    <property type="match status" value="1"/>
</dbReference>
<dbReference type="Gene3D" id="1.20.940.10">
    <property type="entry name" value="Functional domain of the splicing factor Prp18"/>
    <property type="match status" value="1"/>
</dbReference>
<dbReference type="Gene3D" id="2.130.10.10">
    <property type="entry name" value="YVTN repeat-like/Quinoprotein amine dehydrogenase"/>
    <property type="match status" value="1"/>
</dbReference>
<dbReference type="InterPro" id="IPR040251">
    <property type="entry name" value="SEC31-like"/>
</dbReference>
<dbReference type="InterPro" id="IPR009917">
    <property type="entry name" value="SRA1/Sec31"/>
</dbReference>
<dbReference type="InterPro" id="IPR015943">
    <property type="entry name" value="WD40/YVTN_repeat-like_dom_sf"/>
</dbReference>
<dbReference type="InterPro" id="IPR036322">
    <property type="entry name" value="WD40_repeat_dom_sf"/>
</dbReference>
<dbReference type="InterPro" id="IPR001680">
    <property type="entry name" value="WD40_rpt"/>
</dbReference>
<dbReference type="PANTHER" id="PTHR13923">
    <property type="entry name" value="SEC31-RELATED PROTEIN"/>
    <property type="match status" value="1"/>
</dbReference>
<dbReference type="PANTHER" id="PTHR13923:SF11">
    <property type="entry name" value="SECRETORY 31, ISOFORM D"/>
    <property type="match status" value="1"/>
</dbReference>
<dbReference type="Pfam" id="PF07304">
    <property type="entry name" value="SRA1"/>
    <property type="match status" value="1"/>
</dbReference>
<dbReference type="Pfam" id="PF00400">
    <property type="entry name" value="WD40"/>
    <property type="match status" value="2"/>
</dbReference>
<dbReference type="SMART" id="SM00320">
    <property type="entry name" value="WD40"/>
    <property type="match status" value="6"/>
</dbReference>
<dbReference type="SUPFAM" id="SSF50978">
    <property type="entry name" value="WD40 repeat-like"/>
    <property type="match status" value="1"/>
</dbReference>
<dbReference type="PROSITE" id="PS00678">
    <property type="entry name" value="WD_REPEATS_1"/>
    <property type="match status" value="1"/>
</dbReference>
<dbReference type="PROSITE" id="PS50082">
    <property type="entry name" value="WD_REPEATS_2"/>
    <property type="match status" value="2"/>
</dbReference>
<dbReference type="PROSITE" id="PS50294">
    <property type="entry name" value="WD_REPEATS_REGION"/>
    <property type="match status" value="1"/>
</dbReference>
<protein>
    <recommendedName>
        <fullName>Protein transport protein SEC31</fullName>
    </recommendedName>
</protein>
<feature type="chain" id="PRO_0000295445" description="Protein transport protein SEC31">
    <location>
        <begin position="1"/>
        <end position="1244"/>
    </location>
</feature>
<feature type="repeat" description="WD 1">
    <location>
        <begin position="5"/>
        <end position="46"/>
    </location>
</feature>
<feature type="repeat" description="WD 2">
    <location>
        <begin position="61"/>
        <end position="105"/>
    </location>
</feature>
<feature type="repeat" description="WD 3">
    <location>
        <begin position="116"/>
        <end position="156"/>
    </location>
</feature>
<feature type="repeat" description="WD 4">
    <location>
        <begin position="162"/>
        <end position="202"/>
    </location>
</feature>
<feature type="repeat" description="WD 5">
    <location>
        <begin position="209"/>
        <end position="252"/>
    </location>
</feature>
<feature type="repeat" description="WD 6">
    <location>
        <begin position="256"/>
        <end position="296"/>
    </location>
</feature>
<feature type="repeat" description="WD 7">
    <location>
        <begin position="299"/>
        <end position="339"/>
    </location>
</feature>
<feature type="repeat" description="WD 8; interaction with SEC13" evidence="2">
    <location>
        <begin position="380"/>
        <end position="403"/>
    </location>
</feature>
<feature type="region of interest" description="Disordered" evidence="3">
    <location>
        <begin position="460"/>
        <end position="495"/>
    </location>
</feature>
<feature type="region of interest" description="Disordered" evidence="3">
    <location>
        <begin position="794"/>
        <end position="820"/>
    </location>
</feature>
<feature type="region of interest" description="Disordered" evidence="3">
    <location>
        <begin position="868"/>
        <end position="1007"/>
    </location>
</feature>
<feature type="region of interest" description="Disordered" evidence="3">
    <location>
        <begin position="1066"/>
        <end position="1136"/>
    </location>
</feature>
<feature type="compositionally biased region" description="Basic and acidic residues" evidence="3">
    <location>
        <begin position="469"/>
        <end position="486"/>
    </location>
</feature>
<feature type="compositionally biased region" description="Polar residues" evidence="3">
    <location>
        <begin position="794"/>
        <end position="816"/>
    </location>
</feature>
<feature type="compositionally biased region" description="Pro residues" evidence="3">
    <location>
        <begin position="868"/>
        <end position="886"/>
    </location>
</feature>
<feature type="compositionally biased region" description="Low complexity" evidence="3">
    <location>
        <begin position="909"/>
        <end position="919"/>
    </location>
</feature>
<feature type="compositionally biased region" description="Polar residues" evidence="3">
    <location>
        <begin position="991"/>
        <end position="1007"/>
    </location>
</feature>
<sequence length="1244" mass="132788">MVKISEIARTSTFAWSSDTLPILATGTVAGAVDASFNSSSSLELWDIFSATNTNEPIFSAAVEHRFYALAWSKPFEGRPRGLIAAAFENGVIEFWDAEVLIISKDLAKASVHKSSKHSGPVRSLQFNPLQSHVLVSGGSHGQIFIWDTKKFTEPFSPGSAMTPMDEISSVAWNNSVSHILASTGNSGYTSIWDLKSKREVLHLSYTGASGRANFSHVAWHPTKSTELITASDNDACPLILTWDLRNSNAPEKILEGHKKGVLSLDWCQQDPELLISSGKDNTTFLWNPTTGQKLGEYPTTANWAFQTAFAPKVPDIFATASFDGKIVVQSLQDTSPPVSEKVTSNDDNVFWNQLSTTDTQQPVFDIKQAPQWLKTPSAVSFGFGSKLVQVSKDSNGKSIINIQKFVAKGQSSSSELYTALKNNNFKSIIDEKISSNVASDLDKSDWKLLQKLAESGKDEILTEVTTEEEEKKPETEIESEDKKNGDSEDVPASADDSFFDNLGNGKVVLENEAPFVPSGSFKIFSAKVSEEDKSLIKLVLGNKIEDAVHDCIERGKLLEALVLALDASDDIKEKVKNAYFKKNVKKEVSRVLYSVSSQNITDIVSNANVANWKEIAAGITSFTNDPDDFNSKITELGDRILESKTVADSRDTAIRCYLAGNALDKIASIWLKELPALEAHLLESDNAENVSSPSEARLIALTNFVSKIAAYRSISNISGEISGPSAEPISKAIVEYTNLVAGNGEFELANIFLQLLPSDLAGTEKDRINKATGAVAAVTASKTVKSGTSAVANSVTAKTSKVSREVSSTPKPSYQATMPPIGAPLAPSAIPSASVPSSNPYVRASNPYAPHVSSTNIYKPAAPVVQAPPPAQATAVSPPPTGPPKPVYKQETDGWNDLPDTFKSKAPARRAAAVVTATPSPTPLPQTTVPPMSIPPGPKRSMSSGSAAPPPPKGSRANSKVAVPTIQSSPRPAPVHVNNRYAPPPSADVNAPSNTHSSPVGVSPSTKKNPYAVAPEVAPRVAYAPPPASLSGLGFSGGAAAPPAPPKNPYAPSASSVISPRVSNAGIVPPPMGRGIVSPPTSFGSMHAAPIQPAFSGVPPPPPAIGHQPAASAPPPPPAAKTPVPTKSKYPKGDRSHIPEKSVLIYQYLTKVLEAVKPNIPEKYTAHGEDLEKRLNILFDHLNNEDLLTDDAIEDLKEVCTALESKDIESASSLNTSFAANHIDQLGNWHRGITRLITMAEAMY</sequence>
<accession>A3GFK8</accession>
<keyword id="KW-0968">Cytoplasmic vesicle</keyword>
<keyword id="KW-0256">Endoplasmic reticulum</keyword>
<keyword id="KW-0931">ER-Golgi transport</keyword>
<keyword id="KW-0472">Membrane</keyword>
<keyword id="KW-0653">Protein transport</keyword>
<keyword id="KW-1185">Reference proteome</keyword>
<keyword id="KW-0677">Repeat</keyword>
<keyword id="KW-0813">Transport</keyword>
<keyword id="KW-0853">WD repeat</keyword>
<organism>
    <name type="scientific">Scheffersomyces stipitis (strain ATCC 58785 / CBS 6054 / NBRC 10063 / NRRL Y-11545)</name>
    <name type="common">Yeast</name>
    <name type="synonym">Pichia stipitis</name>
    <dbReference type="NCBI Taxonomy" id="322104"/>
    <lineage>
        <taxon>Eukaryota</taxon>
        <taxon>Fungi</taxon>
        <taxon>Dikarya</taxon>
        <taxon>Ascomycota</taxon>
        <taxon>Saccharomycotina</taxon>
        <taxon>Pichiomycetes</taxon>
        <taxon>Debaryomycetaceae</taxon>
        <taxon>Scheffersomyces</taxon>
    </lineage>
</organism>
<name>SEC31_PICST</name>
<evidence type="ECO:0000250" key="1"/>
<evidence type="ECO:0000255" key="2">
    <source>
        <dbReference type="PROSITE-ProRule" id="PRU00221"/>
    </source>
</evidence>
<evidence type="ECO:0000256" key="3">
    <source>
        <dbReference type="SAM" id="MobiDB-lite"/>
    </source>
</evidence>
<evidence type="ECO:0000305" key="4"/>
<reference key="1">
    <citation type="journal article" date="2007" name="Nat. Biotechnol.">
        <title>Genome sequence of the lignocellulose-bioconverting and xylose-fermenting yeast Pichia stipitis.</title>
        <authorList>
            <person name="Jeffries T.W."/>
            <person name="Grigoriev I.V."/>
            <person name="Grimwood J."/>
            <person name="Laplaza J.M."/>
            <person name="Aerts A."/>
            <person name="Salamov A."/>
            <person name="Schmutz J."/>
            <person name="Lindquist E."/>
            <person name="Dehal P."/>
            <person name="Shapiro H."/>
            <person name="Jin Y.-S."/>
            <person name="Passoth V."/>
            <person name="Richardson P.M."/>
        </authorList>
    </citation>
    <scope>NUCLEOTIDE SEQUENCE [LARGE SCALE GENOMIC DNA]</scope>
    <source>
        <strain>ATCC 58785 / CBS 6054 / NBRC 10063 / NRRL Y-11545</strain>
    </source>
</reference>
<proteinExistence type="inferred from homology"/>